<reference key="1">
    <citation type="journal article" date="1998" name="Nature">
        <title>The complete genome of the hyperthermophilic bacterium Aquifex aeolicus.</title>
        <authorList>
            <person name="Deckert G."/>
            <person name="Warren P.V."/>
            <person name="Gaasterland T."/>
            <person name="Young W.G."/>
            <person name="Lenox A.L."/>
            <person name="Graham D.E."/>
            <person name="Overbeek R."/>
            <person name="Snead M.A."/>
            <person name="Keller M."/>
            <person name="Aujay M."/>
            <person name="Huber R."/>
            <person name="Feldman R.A."/>
            <person name="Short J.M."/>
            <person name="Olsen G.J."/>
            <person name="Swanson R.V."/>
        </authorList>
    </citation>
    <scope>NUCLEOTIDE SEQUENCE [LARGE SCALE GENOMIC DNA]</scope>
    <source>
        <strain>VF5</strain>
    </source>
</reference>
<reference key="2">
    <citation type="journal article" date="2003" name="J. Biol. Chem.">
        <title>Aquifex aeolicus tRNA (Gm18) methyltransferase has unique substrate specificity. TRNA recognition mechanism of the enzyme.</title>
        <authorList>
            <person name="Hori H."/>
            <person name="Kubota S."/>
            <person name="Watanabe K."/>
            <person name="Kim J.M."/>
            <person name="Ogasawara T."/>
            <person name="Sawasaki T."/>
            <person name="Endo Y."/>
        </authorList>
    </citation>
    <scope>FUNCTION</scope>
    <scope>CATALYTIC ACTIVITY</scope>
</reference>
<reference key="3">
    <citation type="journal article" date="2005" name="Acta Crystallogr. F">
        <title>Structure of a class II TrmH tRNA-modifying enzyme from Aquifex aeolicus.</title>
        <authorList>
            <person name="Pleshe E."/>
            <person name="Truesdell J."/>
            <person name="Batey R.T."/>
        </authorList>
    </citation>
    <scope>X-RAY CRYSTALLOGRAPHY (1.85 ANGSTROMS)</scope>
    <scope>SUBUNIT</scope>
</reference>
<keyword id="KW-0002">3D-structure</keyword>
<keyword id="KW-0489">Methyltransferase</keyword>
<keyword id="KW-1185">Reference proteome</keyword>
<keyword id="KW-0694">RNA-binding</keyword>
<keyword id="KW-0949">S-adenosyl-L-methionine</keyword>
<keyword id="KW-0808">Transferase</keyword>
<keyword id="KW-0819">tRNA processing</keyword>
<keyword id="KW-0820">tRNA-binding</keyword>
<sequence length="211" mass="24488">MVMEYLVLEKRLKRLREVLEKRQKDLIVFADNVKNEHNFSAIVRTCDAVGVLYLYYYHAEGKKAKINEGITQGSHKWVFIEKVDNPVQKLLEFKNRGFQIVATWLSKESVNFREVDYTKPTVLVVGNELQGVSPEIVEIADKKIVIPMYGMAQSLNVSVATGIILYEAQRQREEKGMYSRPSLSEEEIQKILKKWAYEDVIKERKRTLSTS</sequence>
<organism>
    <name type="scientific">Aquifex aeolicus (strain VF5)</name>
    <dbReference type="NCBI Taxonomy" id="224324"/>
    <lineage>
        <taxon>Bacteria</taxon>
        <taxon>Pseudomonadati</taxon>
        <taxon>Aquificota</taxon>
        <taxon>Aquificia</taxon>
        <taxon>Aquificales</taxon>
        <taxon>Aquificaceae</taxon>
        <taxon>Aquifex</taxon>
    </lineage>
</organism>
<protein>
    <recommendedName>
        <fullName evidence="1 5">tRNA (guanosine(18)-2'-O)-methyltransferase</fullName>
        <ecNumber evidence="1 2">2.1.1.34</ecNumber>
    </recommendedName>
    <alternativeName>
        <fullName evidence="1 5">tRNA [Gm18] methyltransferase</fullName>
    </alternativeName>
</protein>
<proteinExistence type="evidence at protein level"/>
<feature type="chain" id="PRO_0000159771" description="tRNA (guanosine(18)-2'-O)-methyltransferase">
    <location>
        <begin position="1"/>
        <end position="211"/>
    </location>
</feature>
<feature type="binding site" evidence="1">
    <location>
        <position position="103"/>
    </location>
    <ligand>
        <name>S-adenosyl-L-methionine</name>
        <dbReference type="ChEBI" id="CHEBI:59789"/>
    </ligand>
</feature>
<feature type="binding site" evidence="1">
    <location>
        <position position="146"/>
    </location>
    <ligand>
        <name>S-adenosyl-L-methionine</name>
        <dbReference type="ChEBI" id="CHEBI:59789"/>
    </ligand>
</feature>
<feature type="binding site" evidence="1">
    <location>
        <position position="155"/>
    </location>
    <ligand>
        <name>S-adenosyl-L-methionine</name>
        <dbReference type="ChEBI" id="CHEBI:59789"/>
    </ligand>
</feature>
<feature type="helix" evidence="6">
    <location>
        <begin position="7"/>
        <end position="19"/>
    </location>
</feature>
<feature type="strand" evidence="6">
    <location>
        <begin position="23"/>
        <end position="32"/>
    </location>
</feature>
<feature type="helix" evidence="6">
    <location>
        <begin position="36"/>
        <end position="49"/>
    </location>
</feature>
<feature type="strand" evidence="6">
    <location>
        <begin position="51"/>
        <end position="57"/>
    </location>
</feature>
<feature type="helix" evidence="6">
    <location>
        <begin position="68"/>
        <end position="71"/>
    </location>
</feature>
<feature type="helix" evidence="6">
    <location>
        <begin position="74"/>
        <end position="76"/>
    </location>
</feature>
<feature type="strand" evidence="6">
    <location>
        <begin position="77"/>
        <end position="82"/>
    </location>
</feature>
<feature type="helix" evidence="6">
    <location>
        <begin position="86"/>
        <end position="95"/>
    </location>
</feature>
<feature type="strand" evidence="6">
    <location>
        <begin position="99"/>
        <end position="104"/>
    </location>
</feature>
<feature type="strand" evidence="6">
    <location>
        <begin position="109"/>
        <end position="111"/>
    </location>
</feature>
<feature type="helix" evidence="6">
    <location>
        <begin position="112"/>
        <end position="114"/>
    </location>
</feature>
<feature type="strand" evidence="6">
    <location>
        <begin position="119"/>
        <end position="126"/>
    </location>
</feature>
<feature type="helix" evidence="6">
    <location>
        <begin position="134"/>
        <end position="137"/>
    </location>
</feature>
<feature type="strand" evidence="6">
    <location>
        <begin position="141"/>
        <end position="145"/>
    </location>
</feature>
<feature type="helix" evidence="6">
    <location>
        <begin position="157"/>
        <end position="174"/>
    </location>
</feature>
<feature type="turn" evidence="6">
    <location>
        <begin position="175"/>
        <end position="178"/>
    </location>
</feature>
<feature type="helix" evidence="6">
    <location>
        <begin position="185"/>
        <end position="200"/>
    </location>
</feature>
<dbReference type="EC" id="2.1.1.34" evidence="1 2"/>
<dbReference type="EMBL" id="AE000657">
    <property type="protein sequence ID" value="AAC07528.1"/>
    <property type="molecule type" value="Genomic_DNA"/>
</dbReference>
<dbReference type="PIR" id="H70443">
    <property type="entry name" value="H70443"/>
</dbReference>
<dbReference type="RefSeq" id="NP_214143.1">
    <property type="nucleotide sequence ID" value="NC_000918.1"/>
</dbReference>
<dbReference type="RefSeq" id="WP_010881080.1">
    <property type="nucleotide sequence ID" value="NC_000918.1"/>
</dbReference>
<dbReference type="PDB" id="1ZJR">
    <property type="method" value="X-ray"/>
    <property type="resolution" value="1.85 A"/>
    <property type="chains" value="A=1-211"/>
</dbReference>
<dbReference type="PDBsum" id="1ZJR"/>
<dbReference type="SMR" id="O67577"/>
<dbReference type="FunCoup" id="O67577">
    <property type="interactions" value="192"/>
</dbReference>
<dbReference type="STRING" id="224324.aq_1661"/>
<dbReference type="EnsemblBacteria" id="AAC07528">
    <property type="protein sequence ID" value="AAC07528"/>
    <property type="gene ID" value="aq_1661"/>
</dbReference>
<dbReference type="KEGG" id="aae:aq_1661"/>
<dbReference type="PATRIC" id="fig|224324.8.peg.1283"/>
<dbReference type="eggNOG" id="COG0566">
    <property type="taxonomic scope" value="Bacteria"/>
</dbReference>
<dbReference type="HOGENOM" id="CLU_021322_4_2_0"/>
<dbReference type="InParanoid" id="O67577"/>
<dbReference type="OrthoDB" id="9794400at2"/>
<dbReference type="BRENDA" id="2.1.1.34">
    <property type="organism ID" value="396"/>
</dbReference>
<dbReference type="EvolutionaryTrace" id="O67577"/>
<dbReference type="Proteomes" id="UP000000798">
    <property type="component" value="Chromosome"/>
</dbReference>
<dbReference type="GO" id="GO:0141100">
    <property type="term" value="F:tRNA (guanine(18)-2'-O)-methyltransferase activity"/>
    <property type="evidence" value="ECO:0007669"/>
    <property type="project" value="UniProtKB-UniRule"/>
</dbReference>
<dbReference type="GO" id="GO:0000049">
    <property type="term" value="F:tRNA binding"/>
    <property type="evidence" value="ECO:0007669"/>
    <property type="project" value="UniProtKB-UniRule"/>
</dbReference>
<dbReference type="GO" id="GO:0002938">
    <property type="term" value="P:tRNA guanine ribose methylation"/>
    <property type="evidence" value="ECO:0000314"/>
    <property type="project" value="UniProtKB"/>
</dbReference>
<dbReference type="CDD" id="cd18092">
    <property type="entry name" value="SpoU-like_TrmH"/>
    <property type="match status" value="1"/>
</dbReference>
<dbReference type="FunFam" id="3.40.1280.10:FF:000115">
    <property type="entry name" value="tRNA (guanosine(18)-2'-O)-methyltransferase"/>
    <property type="match status" value="1"/>
</dbReference>
<dbReference type="Gene3D" id="3.40.1280.10">
    <property type="match status" value="1"/>
</dbReference>
<dbReference type="HAMAP" id="MF_02060">
    <property type="entry name" value="tRNA_methyltr_TrmH"/>
    <property type="match status" value="1"/>
</dbReference>
<dbReference type="InterPro" id="IPR029028">
    <property type="entry name" value="Alpha/beta_knot_MTases"/>
</dbReference>
<dbReference type="InterPro" id="IPR022724">
    <property type="entry name" value="rRNA_MeTrfase_SpoU_C"/>
</dbReference>
<dbReference type="InterPro" id="IPR001537">
    <property type="entry name" value="SpoU_MeTrfase"/>
</dbReference>
<dbReference type="InterPro" id="IPR033671">
    <property type="entry name" value="TrmH"/>
</dbReference>
<dbReference type="InterPro" id="IPR029026">
    <property type="entry name" value="tRNA_m1G_MTases_N"/>
</dbReference>
<dbReference type="PANTHER" id="PTHR43453">
    <property type="entry name" value="RRNA METHYLASE-LIKE"/>
    <property type="match status" value="1"/>
</dbReference>
<dbReference type="PANTHER" id="PTHR43453:SF1">
    <property type="entry name" value="TRNA_RRNA METHYLTRANSFERASE SPOU TYPE DOMAIN-CONTAINING PROTEIN"/>
    <property type="match status" value="1"/>
</dbReference>
<dbReference type="Pfam" id="PF12105">
    <property type="entry name" value="SpoU_methylas_C"/>
    <property type="match status" value="1"/>
</dbReference>
<dbReference type="Pfam" id="PF00588">
    <property type="entry name" value="SpoU_methylase"/>
    <property type="match status" value="1"/>
</dbReference>
<dbReference type="SUPFAM" id="SSF75217">
    <property type="entry name" value="alpha/beta knot"/>
    <property type="match status" value="1"/>
</dbReference>
<name>TRMH_AQUAE</name>
<comment type="function">
    <text evidence="2">Catalyzes the 2'-O methylation of guanosine at position 18 in tRNA. Type II methylase, which methylates only a subset of tRNA species.</text>
</comment>
<comment type="catalytic activity">
    <reaction evidence="1 2">
        <text>guanosine(18) in tRNA + S-adenosyl-L-methionine = 2'-O-methylguanosine(18) in tRNA + S-adenosyl-L-homocysteine + H(+)</text>
        <dbReference type="Rhea" id="RHEA:20077"/>
        <dbReference type="Rhea" id="RHEA-COMP:10190"/>
        <dbReference type="Rhea" id="RHEA-COMP:10192"/>
        <dbReference type="ChEBI" id="CHEBI:15378"/>
        <dbReference type="ChEBI" id="CHEBI:57856"/>
        <dbReference type="ChEBI" id="CHEBI:59789"/>
        <dbReference type="ChEBI" id="CHEBI:74269"/>
        <dbReference type="ChEBI" id="CHEBI:74445"/>
        <dbReference type="EC" id="2.1.1.34"/>
    </reaction>
</comment>
<comment type="subunit">
    <text evidence="3">Homodimer.</text>
</comment>
<comment type="similarity">
    <text evidence="1">Belongs to the class IV-like SAM-binding methyltransferase superfamily. RNA methyltransferase TrmH family.</text>
</comment>
<gene>
    <name evidence="1 4" type="primary">trmH</name>
    <name evidence="4" type="synonym">spoU</name>
    <name type="ordered locus">aq_1661</name>
</gene>
<evidence type="ECO:0000255" key="1">
    <source>
        <dbReference type="HAMAP-Rule" id="MF_02060"/>
    </source>
</evidence>
<evidence type="ECO:0000269" key="2">
    <source>
    </source>
</evidence>
<evidence type="ECO:0000269" key="3">
    <source>
    </source>
</evidence>
<evidence type="ECO:0000303" key="4">
    <source>
    </source>
</evidence>
<evidence type="ECO:0000305" key="5"/>
<evidence type="ECO:0007829" key="6">
    <source>
        <dbReference type="PDB" id="1ZJR"/>
    </source>
</evidence>
<accession>O67577</accession>